<organism>
    <name type="scientific">Staphylococcus aureus (strain Newman)</name>
    <dbReference type="NCBI Taxonomy" id="426430"/>
    <lineage>
        <taxon>Bacteria</taxon>
        <taxon>Bacillati</taxon>
        <taxon>Bacillota</taxon>
        <taxon>Bacilli</taxon>
        <taxon>Bacillales</taxon>
        <taxon>Staphylococcaceae</taxon>
        <taxon>Staphylococcus</taxon>
    </lineage>
</organism>
<reference key="1">
    <citation type="journal article" date="2008" name="J. Bacteriol.">
        <title>Genome sequence of Staphylococcus aureus strain Newman and comparative analysis of staphylococcal genomes: polymorphism and evolution of two major pathogenicity islands.</title>
        <authorList>
            <person name="Baba T."/>
            <person name="Bae T."/>
            <person name="Schneewind O."/>
            <person name="Takeuchi F."/>
            <person name="Hiramatsu K."/>
        </authorList>
    </citation>
    <scope>NUCLEOTIDE SEQUENCE [LARGE SCALE GENOMIC DNA]</scope>
    <source>
        <strain>Newman</strain>
    </source>
</reference>
<name>AROK_STAAE</name>
<sequence length="174" mass="20222">MNHDKSPIILIGFMGTGKSTIGKYVADEQNLSFIDIDSYIEEKYKLTIPEIFCKHGEQYFRNLEFTCLQECINTADIIATGGGIIESEEAFNFLKNQKNIIWLDCNIDIIYSRINDDPHRPNANNKTIKQLNDLYCSRNLRYNEIAFKKFDSHLLSISEIYYELLNLIKASDQY</sequence>
<gene>
    <name evidence="1" type="primary">aroK</name>
    <name type="ordered locus">NWMN_1442</name>
</gene>
<protein>
    <recommendedName>
        <fullName evidence="1">Shikimate kinase</fullName>
        <shortName evidence="1">SK</shortName>
        <ecNumber evidence="1">2.7.1.71</ecNumber>
    </recommendedName>
</protein>
<accession>A6QH82</accession>
<proteinExistence type="inferred from homology"/>
<comment type="function">
    <text evidence="1">Catalyzes the specific phosphorylation of the 3-hydroxyl group of shikimic acid using ATP as a cosubstrate.</text>
</comment>
<comment type="catalytic activity">
    <reaction evidence="1">
        <text>shikimate + ATP = 3-phosphoshikimate + ADP + H(+)</text>
        <dbReference type="Rhea" id="RHEA:13121"/>
        <dbReference type="ChEBI" id="CHEBI:15378"/>
        <dbReference type="ChEBI" id="CHEBI:30616"/>
        <dbReference type="ChEBI" id="CHEBI:36208"/>
        <dbReference type="ChEBI" id="CHEBI:145989"/>
        <dbReference type="ChEBI" id="CHEBI:456216"/>
        <dbReference type="EC" id="2.7.1.71"/>
    </reaction>
</comment>
<comment type="cofactor">
    <cofactor evidence="1">
        <name>Mg(2+)</name>
        <dbReference type="ChEBI" id="CHEBI:18420"/>
    </cofactor>
    <text evidence="1">Binds 1 Mg(2+) ion per subunit.</text>
</comment>
<comment type="pathway">
    <text evidence="1">Metabolic intermediate biosynthesis; chorismate biosynthesis; chorismate from D-erythrose 4-phosphate and phosphoenolpyruvate: step 5/7.</text>
</comment>
<comment type="subunit">
    <text evidence="1">Monomer.</text>
</comment>
<comment type="subcellular location">
    <subcellularLocation>
        <location evidence="1">Cytoplasm</location>
    </subcellularLocation>
</comment>
<comment type="similarity">
    <text evidence="1">Belongs to the shikimate kinase family.</text>
</comment>
<keyword id="KW-0028">Amino-acid biosynthesis</keyword>
<keyword id="KW-0057">Aromatic amino acid biosynthesis</keyword>
<keyword id="KW-0067">ATP-binding</keyword>
<keyword id="KW-0963">Cytoplasm</keyword>
<keyword id="KW-0418">Kinase</keyword>
<keyword id="KW-0460">Magnesium</keyword>
<keyword id="KW-0479">Metal-binding</keyword>
<keyword id="KW-0547">Nucleotide-binding</keyword>
<keyword id="KW-0808">Transferase</keyword>
<evidence type="ECO:0000255" key="1">
    <source>
        <dbReference type="HAMAP-Rule" id="MF_00109"/>
    </source>
</evidence>
<feature type="chain" id="PRO_1000071325" description="Shikimate kinase">
    <location>
        <begin position="1"/>
        <end position="174"/>
    </location>
</feature>
<feature type="binding site" evidence="1">
    <location>
        <begin position="15"/>
        <end position="20"/>
    </location>
    <ligand>
        <name>ATP</name>
        <dbReference type="ChEBI" id="CHEBI:30616"/>
    </ligand>
</feature>
<feature type="binding site" evidence="1">
    <location>
        <position position="19"/>
    </location>
    <ligand>
        <name>Mg(2+)</name>
        <dbReference type="ChEBI" id="CHEBI:18420"/>
    </ligand>
</feature>
<feature type="binding site" evidence="1">
    <location>
        <position position="37"/>
    </location>
    <ligand>
        <name>substrate</name>
    </ligand>
</feature>
<feature type="binding site" evidence="1">
    <location>
        <position position="61"/>
    </location>
    <ligand>
        <name>substrate</name>
    </ligand>
</feature>
<feature type="binding site" evidence="1">
    <location>
        <position position="82"/>
    </location>
    <ligand>
        <name>substrate</name>
    </ligand>
</feature>
<feature type="binding site" evidence="1">
    <location>
        <position position="120"/>
    </location>
    <ligand>
        <name>ATP</name>
        <dbReference type="ChEBI" id="CHEBI:30616"/>
    </ligand>
</feature>
<feature type="binding site" evidence="1">
    <location>
        <position position="138"/>
    </location>
    <ligand>
        <name>substrate</name>
    </ligand>
</feature>
<dbReference type="EC" id="2.7.1.71" evidence="1"/>
<dbReference type="EMBL" id="AP009351">
    <property type="protein sequence ID" value="BAF67714.1"/>
    <property type="molecule type" value="Genomic_DNA"/>
</dbReference>
<dbReference type="RefSeq" id="WP_001015117.1">
    <property type="nucleotide sequence ID" value="NZ_JBBIAE010000001.1"/>
</dbReference>
<dbReference type="SMR" id="A6QH82"/>
<dbReference type="KEGG" id="sae:NWMN_1442"/>
<dbReference type="HOGENOM" id="CLU_057607_4_3_9"/>
<dbReference type="UniPathway" id="UPA00053">
    <property type="reaction ID" value="UER00088"/>
</dbReference>
<dbReference type="Proteomes" id="UP000006386">
    <property type="component" value="Chromosome"/>
</dbReference>
<dbReference type="GO" id="GO:0005829">
    <property type="term" value="C:cytosol"/>
    <property type="evidence" value="ECO:0007669"/>
    <property type="project" value="TreeGrafter"/>
</dbReference>
<dbReference type="GO" id="GO:0005524">
    <property type="term" value="F:ATP binding"/>
    <property type="evidence" value="ECO:0007669"/>
    <property type="project" value="UniProtKB-UniRule"/>
</dbReference>
<dbReference type="GO" id="GO:0000287">
    <property type="term" value="F:magnesium ion binding"/>
    <property type="evidence" value="ECO:0007669"/>
    <property type="project" value="UniProtKB-UniRule"/>
</dbReference>
<dbReference type="GO" id="GO:0004765">
    <property type="term" value="F:shikimate kinase activity"/>
    <property type="evidence" value="ECO:0007669"/>
    <property type="project" value="UniProtKB-UniRule"/>
</dbReference>
<dbReference type="GO" id="GO:0008652">
    <property type="term" value="P:amino acid biosynthetic process"/>
    <property type="evidence" value="ECO:0007669"/>
    <property type="project" value="UniProtKB-KW"/>
</dbReference>
<dbReference type="GO" id="GO:0009073">
    <property type="term" value="P:aromatic amino acid family biosynthetic process"/>
    <property type="evidence" value="ECO:0007669"/>
    <property type="project" value="UniProtKB-KW"/>
</dbReference>
<dbReference type="GO" id="GO:0009423">
    <property type="term" value="P:chorismate biosynthetic process"/>
    <property type="evidence" value="ECO:0007669"/>
    <property type="project" value="UniProtKB-UniRule"/>
</dbReference>
<dbReference type="CDD" id="cd00464">
    <property type="entry name" value="SK"/>
    <property type="match status" value="1"/>
</dbReference>
<dbReference type="FunFam" id="3.40.50.300:FF:001734">
    <property type="entry name" value="Shikimate kinase"/>
    <property type="match status" value="1"/>
</dbReference>
<dbReference type="Gene3D" id="3.40.50.300">
    <property type="entry name" value="P-loop containing nucleotide triphosphate hydrolases"/>
    <property type="match status" value="1"/>
</dbReference>
<dbReference type="HAMAP" id="MF_00109">
    <property type="entry name" value="Shikimate_kinase"/>
    <property type="match status" value="1"/>
</dbReference>
<dbReference type="InterPro" id="IPR027417">
    <property type="entry name" value="P-loop_NTPase"/>
</dbReference>
<dbReference type="InterPro" id="IPR031322">
    <property type="entry name" value="Shikimate/glucono_kinase"/>
</dbReference>
<dbReference type="InterPro" id="IPR000623">
    <property type="entry name" value="Shikimate_kinase/TSH1"/>
</dbReference>
<dbReference type="InterPro" id="IPR023000">
    <property type="entry name" value="Shikimate_kinase_CS"/>
</dbReference>
<dbReference type="PANTHER" id="PTHR21087">
    <property type="entry name" value="SHIKIMATE KINASE"/>
    <property type="match status" value="1"/>
</dbReference>
<dbReference type="PANTHER" id="PTHR21087:SF16">
    <property type="entry name" value="SHIKIMATE KINASE 1, CHLOROPLASTIC"/>
    <property type="match status" value="1"/>
</dbReference>
<dbReference type="Pfam" id="PF01202">
    <property type="entry name" value="SKI"/>
    <property type="match status" value="1"/>
</dbReference>
<dbReference type="PRINTS" id="PR01100">
    <property type="entry name" value="SHIKIMTKNASE"/>
</dbReference>
<dbReference type="SUPFAM" id="SSF52540">
    <property type="entry name" value="P-loop containing nucleoside triphosphate hydrolases"/>
    <property type="match status" value="1"/>
</dbReference>
<dbReference type="PROSITE" id="PS01128">
    <property type="entry name" value="SHIKIMATE_KINASE"/>
    <property type="match status" value="1"/>
</dbReference>